<proteinExistence type="inferred from homology"/>
<reference key="1">
    <citation type="submission" date="2007-05" db="EMBL/GenBank/DDBJ databases">
        <title>Complete sequence of Dehalococcoides sp. BAV1.</title>
        <authorList>
            <consortium name="US DOE Joint Genome Institute"/>
            <person name="Copeland A."/>
            <person name="Lucas S."/>
            <person name="Lapidus A."/>
            <person name="Barry K."/>
            <person name="Detter J.C."/>
            <person name="Glavina del Rio T."/>
            <person name="Hammon N."/>
            <person name="Israni S."/>
            <person name="Pitluck S."/>
            <person name="Lowry S."/>
            <person name="Clum A."/>
            <person name="Schmutz J."/>
            <person name="Larimer F."/>
            <person name="Land M."/>
            <person name="Hauser L."/>
            <person name="Kyrpides N."/>
            <person name="Kim E."/>
            <person name="Ritalahti K.M."/>
            <person name="Loeffler F."/>
            <person name="Richardson P."/>
        </authorList>
    </citation>
    <scope>NUCLEOTIDE SEQUENCE [LARGE SCALE GENOMIC DNA]</scope>
    <source>
        <strain>ATCC BAA-2100 / JCM 16839 / KCTC 5957 / BAV1</strain>
    </source>
</reference>
<organism>
    <name type="scientific">Dehalococcoides mccartyi (strain ATCC BAA-2100 / JCM 16839 / KCTC 5957 / BAV1)</name>
    <dbReference type="NCBI Taxonomy" id="216389"/>
    <lineage>
        <taxon>Bacteria</taxon>
        <taxon>Bacillati</taxon>
        <taxon>Chloroflexota</taxon>
        <taxon>Dehalococcoidia</taxon>
        <taxon>Dehalococcoidales</taxon>
        <taxon>Dehalococcoidaceae</taxon>
        <taxon>Dehalococcoides</taxon>
    </lineage>
</organism>
<accession>A5FSU1</accession>
<dbReference type="EC" id="6.1.1.7" evidence="1"/>
<dbReference type="EMBL" id="CP000688">
    <property type="protein sequence ID" value="ABQ16639.1"/>
    <property type="molecule type" value="Genomic_DNA"/>
</dbReference>
<dbReference type="SMR" id="A5FSU1"/>
<dbReference type="KEGG" id="deb:DehaBAV1_0047"/>
<dbReference type="PATRIC" id="fig|216389.18.peg.49"/>
<dbReference type="HOGENOM" id="CLU_004485_1_1_0"/>
<dbReference type="GO" id="GO:0005829">
    <property type="term" value="C:cytosol"/>
    <property type="evidence" value="ECO:0007669"/>
    <property type="project" value="TreeGrafter"/>
</dbReference>
<dbReference type="GO" id="GO:0004813">
    <property type="term" value="F:alanine-tRNA ligase activity"/>
    <property type="evidence" value="ECO:0007669"/>
    <property type="project" value="UniProtKB-UniRule"/>
</dbReference>
<dbReference type="GO" id="GO:0002161">
    <property type="term" value="F:aminoacyl-tRNA deacylase activity"/>
    <property type="evidence" value="ECO:0007669"/>
    <property type="project" value="TreeGrafter"/>
</dbReference>
<dbReference type="GO" id="GO:0005524">
    <property type="term" value="F:ATP binding"/>
    <property type="evidence" value="ECO:0007669"/>
    <property type="project" value="UniProtKB-UniRule"/>
</dbReference>
<dbReference type="GO" id="GO:0000049">
    <property type="term" value="F:tRNA binding"/>
    <property type="evidence" value="ECO:0007669"/>
    <property type="project" value="UniProtKB-KW"/>
</dbReference>
<dbReference type="GO" id="GO:0008270">
    <property type="term" value="F:zinc ion binding"/>
    <property type="evidence" value="ECO:0007669"/>
    <property type="project" value="UniProtKB-UniRule"/>
</dbReference>
<dbReference type="GO" id="GO:0006419">
    <property type="term" value="P:alanyl-tRNA aminoacylation"/>
    <property type="evidence" value="ECO:0007669"/>
    <property type="project" value="UniProtKB-UniRule"/>
</dbReference>
<dbReference type="CDD" id="cd00673">
    <property type="entry name" value="AlaRS_core"/>
    <property type="match status" value="1"/>
</dbReference>
<dbReference type="FunFam" id="2.40.30.130:FF:000001">
    <property type="entry name" value="Alanine--tRNA ligase"/>
    <property type="match status" value="1"/>
</dbReference>
<dbReference type="FunFam" id="3.10.310.40:FF:000001">
    <property type="entry name" value="Alanine--tRNA ligase"/>
    <property type="match status" value="1"/>
</dbReference>
<dbReference type="FunFam" id="3.30.930.10:FF:000004">
    <property type="entry name" value="Alanine--tRNA ligase"/>
    <property type="match status" value="1"/>
</dbReference>
<dbReference type="FunFam" id="3.30.980.10:FF:000004">
    <property type="entry name" value="Alanine--tRNA ligase, cytoplasmic"/>
    <property type="match status" value="1"/>
</dbReference>
<dbReference type="Gene3D" id="2.40.30.130">
    <property type="match status" value="1"/>
</dbReference>
<dbReference type="Gene3D" id="3.10.310.40">
    <property type="match status" value="1"/>
</dbReference>
<dbReference type="Gene3D" id="3.30.54.20">
    <property type="match status" value="1"/>
</dbReference>
<dbReference type="Gene3D" id="3.30.930.10">
    <property type="entry name" value="Bira Bifunctional Protein, Domain 2"/>
    <property type="match status" value="1"/>
</dbReference>
<dbReference type="Gene3D" id="3.30.980.10">
    <property type="entry name" value="Threonyl-trna Synthetase, Chain A, domain 2"/>
    <property type="match status" value="1"/>
</dbReference>
<dbReference type="HAMAP" id="MF_00036_B">
    <property type="entry name" value="Ala_tRNA_synth_B"/>
    <property type="match status" value="1"/>
</dbReference>
<dbReference type="InterPro" id="IPR045864">
    <property type="entry name" value="aa-tRNA-synth_II/BPL/LPL"/>
</dbReference>
<dbReference type="InterPro" id="IPR002318">
    <property type="entry name" value="Ala-tRNA-lgiase_IIc"/>
</dbReference>
<dbReference type="InterPro" id="IPR018162">
    <property type="entry name" value="Ala-tRNA-ligase_IIc_anticod-bd"/>
</dbReference>
<dbReference type="InterPro" id="IPR018165">
    <property type="entry name" value="Ala-tRNA-synth_IIc_core"/>
</dbReference>
<dbReference type="InterPro" id="IPR018164">
    <property type="entry name" value="Ala-tRNA-synth_IIc_N"/>
</dbReference>
<dbReference type="InterPro" id="IPR050058">
    <property type="entry name" value="Ala-tRNA_ligase"/>
</dbReference>
<dbReference type="InterPro" id="IPR023033">
    <property type="entry name" value="Ala_tRNA_ligase_euk/bac"/>
</dbReference>
<dbReference type="InterPro" id="IPR003156">
    <property type="entry name" value="DHHA1_dom"/>
</dbReference>
<dbReference type="InterPro" id="IPR018163">
    <property type="entry name" value="Thr/Ala-tRNA-synth_IIc_edit"/>
</dbReference>
<dbReference type="InterPro" id="IPR009000">
    <property type="entry name" value="Transl_B-barrel_sf"/>
</dbReference>
<dbReference type="InterPro" id="IPR012947">
    <property type="entry name" value="tRNA_SAD"/>
</dbReference>
<dbReference type="NCBIfam" id="TIGR00344">
    <property type="entry name" value="alaS"/>
    <property type="match status" value="1"/>
</dbReference>
<dbReference type="PANTHER" id="PTHR11777:SF9">
    <property type="entry name" value="ALANINE--TRNA LIGASE, CYTOPLASMIC"/>
    <property type="match status" value="1"/>
</dbReference>
<dbReference type="PANTHER" id="PTHR11777">
    <property type="entry name" value="ALANYL-TRNA SYNTHETASE"/>
    <property type="match status" value="1"/>
</dbReference>
<dbReference type="Pfam" id="PF02272">
    <property type="entry name" value="DHHA1"/>
    <property type="match status" value="1"/>
</dbReference>
<dbReference type="Pfam" id="PF01411">
    <property type="entry name" value="tRNA-synt_2c"/>
    <property type="match status" value="1"/>
</dbReference>
<dbReference type="Pfam" id="PF07973">
    <property type="entry name" value="tRNA_SAD"/>
    <property type="match status" value="1"/>
</dbReference>
<dbReference type="PRINTS" id="PR00980">
    <property type="entry name" value="TRNASYNTHALA"/>
</dbReference>
<dbReference type="SMART" id="SM00863">
    <property type="entry name" value="tRNA_SAD"/>
    <property type="match status" value="1"/>
</dbReference>
<dbReference type="SUPFAM" id="SSF55681">
    <property type="entry name" value="Class II aaRS and biotin synthetases"/>
    <property type="match status" value="1"/>
</dbReference>
<dbReference type="SUPFAM" id="SSF101353">
    <property type="entry name" value="Putative anticodon-binding domain of alanyl-tRNA synthetase (AlaRS)"/>
    <property type="match status" value="1"/>
</dbReference>
<dbReference type="SUPFAM" id="SSF55186">
    <property type="entry name" value="ThrRS/AlaRS common domain"/>
    <property type="match status" value="1"/>
</dbReference>
<dbReference type="SUPFAM" id="SSF50447">
    <property type="entry name" value="Translation proteins"/>
    <property type="match status" value="1"/>
</dbReference>
<dbReference type="PROSITE" id="PS50860">
    <property type="entry name" value="AA_TRNA_LIGASE_II_ALA"/>
    <property type="match status" value="1"/>
</dbReference>
<gene>
    <name evidence="1" type="primary">alaS</name>
    <name type="ordered locus">DehaBAV1_0047</name>
</gene>
<keyword id="KW-0030">Aminoacyl-tRNA synthetase</keyword>
<keyword id="KW-0067">ATP-binding</keyword>
<keyword id="KW-0963">Cytoplasm</keyword>
<keyword id="KW-0436">Ligase</keyword>
<keyword id="KW-0479">Metal-binding</keyword>
<keyword id="KW-0547">Nucleotide-binding</keyword>
<keyword id="KW-0648">Protein biosynthesis</keyword>
<keyword id="KW-0694">RNA-binding</keyword>
<keyword id="KW-0820">tRNA-binding</keyword>
<keyword id="KW-0862">Zinc</keyword>
<sequence length="871" mass="96542">MFSSDELRENYLKFFEEKGHKRIASSSLIPHNDPTLLLTTAGMVQFKPYYLGVAKPENPRMASCQKCFRTTDIESVGDASHLTMFEMLGNFSIGNYFKKEAIAWAWEYVTQRLNIPAERLWITVYLDDDEAIALWKEQGVPENRIVRLGAADNFWGPAGDSGPCGPCSEIHYDFGQETGCGKADCNPSCKCGRFCEIWNLVFVQFNQDKSGKRQNLPAPSIDTGMGLERLTILMQSKKNVYETDIFAPIVEKACLLSGRKYGCDAATDRALRIVSEHSRGITFLIADGVIPDKAGRGYVLRRLLRRAVLFGRRLGLERPFLVDMAGAVINRMSGIYPELKKRQTYVLEMIASEEARFSETLATGLELLEEIVRQTKGGRISGQDAFKLYDTYGFPVEMTTEIAAEKGLSVDLDGFESEMEIQRTKARSSRKFSFDAAATAEAVKNMRHAEKTCFVGYELAIQKSTIKDILTEGGTVDSIEEGDEASIVLDESPFYAEMGGQVGDTGEIITDAGRFEVKNTLHLPNGVFLHQGRVINGCLKISEAATAHINEERRRDIARNHTATHILQTALREVLGEQVQQRGSVVTPDRLRFDFSHLKPMSKDEMRRVEEFVNDKIRRNLPVYAEEMPYRHALEEGVTALFGEKYGDRVRVLRVGRPAVSAELCGGTHVTASGEIALFKIMSESSVGAGLRRIEAVTGREAEAFINLQQDSLSELSGMLESTAEESPRKLAELKEEIDTLKKAVQNLERQMSRGEAEELLSKAEDYKGVKLLVSRMTSVNADTLRETADFLRDKLGSGVIVLGTVTEDKPFFLCMVTPDLIAKGYHAGNIVKKLSQIAGGGGGGKPNMAQGGGRDKSKLDEALQAVKGMI</sequence>
<comment type="function">
    <text evidence="1">Catalyzes the attachment of alanine to tRNA(Ala) in a two-step reaction: alanine is first activated by ATP to form Ala-AMP and then transferred to the acceptor end of tRNA(Ala). Also edits incorrectly charged Ser-tRNA(Ala) and Gly-tRNA(Ala) via its editing domain.</text>
</comment>
<comment type="catalytic activity">
    <reaction evidence="1">
        <text>tRNA(Ala) + L-alanine + ATP = L-alanyl-tRNA(Ala) + AMP + diphosphate</text>
        <dbReference type="Rhea" id="RHEA:12540"/>
        <dbReference type="Rhea" id="RHEA-COMP:9657"/>
        <dbReference type="Rhea" id="RHEA-COMP:9923"/>
        <dbReference type="ChEBI" id="CHEBI:30616"/>
        <dbReference type="ChEBI" id="CHEBI:33019"/>
        <dbReference type="ChEBI" id="CHEBI:57972"/>
        <dbReference type="ChEBI" id="CHEBI:78442"/>
        <dbReference type="ChEBI" id="CHEBI:78497"/>
        <dbReference type="ChEBI" id="CHEBI:456215"/>
        <dbReference type="EC" id="6.1.1.7"/>
    </reaction>
</comment>
<comment type="cofactor">
    <cofactor evidence="1">
        <name>Zn(2+)</name>
        <dbReference type="ChEBI" id="CHEBI:29105"/>
    </cofactor>
    <text evidence="1">Binds 1 zinc ion per subunit.</text>
</comment>
<comment type="subcellular location">
    <subcellularLocation>
        <location evidence="1">Cytoplasm</location>
    </subcellularLocation>
</comment>
<comment type="domain">
    <text evidence="1">Consists of three domains; the N-terminal catalytic domain, the editing domain and the C-terminal C-Ala domain. The editing domain removes incorrectly charged amino acids, while the C-Ala domain, along with tRNA(Ala), serves as a bridge to cooperatively bring together the editing and aminoacylation centers thus stimulating deacylation of misacylated tRNAs.</text>
</comment>
<comment type="similarity">
    <text evidence="1">Belongs to the class-II aminoacyl-tRNA synthetase family.</text>
</comment>
<protein>
    <recommendedName>
        <fullName evidence="1">Alanine--tRNA ligase</fullName>
        <ecNumber evidence="1">6.1.1.7</ecNumber>
    </recommendedName>
    <alternativeName>
        <fullName evidence="1">Alanyl-tRNA synthetase</fullName>
        <shortName evidence="1">AlaRS</shortName>
    </alternativeName>
</protein>
<name>SYA_DEHMB</name>
<feature type="chain" id="PRO_0000347580" description="Alanine--tRNA ligase">
    <location>
        <begin position="1"/>
        <end position="871"/>
    </location>
</feature>
<feature type="binding site" evidence="1">
    <location>
        <position position="561"/>
    </location>
    <ligand>
        <name>Zn(2+)</name>
        <dbReference type="ChEBI" id="CHEBI:29105"/>
    </ligand>
</feature>
<feature type="binding site" evidence="1">
    <location>
        <position position="565"/>
    </location>
    <ligand>
        <name>Zn(2+)</name>
        <dbReference type="ChEBI" id="CHEBI:29105"/>
    </ligand>
</feature>
<feature type="binding site" evidence="1">
    <location>
        <position position="665"/>
    </location>
    <ligand>
        <name>Zn(2+)</name>
        <dbReference type="ChEBI" id="CHEBI:29105"/>
    </ligand>
</feature>
<feature type="binding site" evidence="1">
    <location>
        <position position="669"/>
    </location>
    <ligand>
        <name>Zn(2+)</name>
        <dbReference type="ChEBI" id="CHEBI:29105"/>
    </ligand>
</feature>
<evidence type="ECO:0000255" key="1">
    <source>
        <dbReference type="HAMAP-Rule" id="MF_00036"/>
    </source>
</evidence>